<evidence type="ECO:0000255" key="1">
    <source>
        <dbReference type="HAMAP-Rule" id="MF_00116"/>
    </source>
</evidence>
<evidence type="ECO:0000256" key="2">
    <source>
        <dbReference type="SAM" id="MobiDB-lite"/>
    </source>
</evidence>
<keyword id="KW-0378">Hydrolase</keyword>
<keyword id="KW-0460">Magnesium</keyword>
<keyword id="KW-0479">Metal-binding</keyword>
<keyword id="KW-0546">Nucleotide metabolism</keyword>
<keyword id="KW-1185">Reference proteome</keyword>
<name>DUT_HELHP</name>
<proteinExistence type="inferred from homology"/>
<dbReference type="EC" id="3.6.1.23" evidence="1"/>
<dbReference type="EMBL" id="AE017125">
    <property type="protein sequence ID" value="AAP76750.1"/>
    <property type="molecule type" value="Genomic_DNA"/>
</dbReference>
<dbReference type="SMR" id="Q7VJU0"/>
<dbReference type="STRING" id="235279.HH_0153"/>
<dbReference type="KEGG" id="hhe:HH_0153"/>
<dbReference type="eggNOG" id="COG0756">
    <property type="taxonomic scope" value="Bacteria"/>
</dbReference>
<dbReference type="HOGENOM" id="CLU_068508_1_2_7"/>
<dbReference type="UniPathway" id="UPA00610">
    <property type="reaction ID" value="UER00666"/>
</dbReference>
<dbReference type="Proteomes" id="UP000002495">
    <property type="component" value="Chromosome"/>
</dbReference>
<dbReference type="GO" id="GO:0004170">
    <property type="term" value="F:dUTP diphosphatase activity"/>
    <property type="evidence" value="ECO:0007669"/>
    <property type="project" value="UniProtKB-UniRule"/>
</dbReference>
<dbReference type="GO" id="GO:0000287">
    <property type="term" value="F:magnesium ion binding"/>
    <property type="evidence" value="ECO:0007669"/>
    <property type="project" value="UniProtKB-UniRule"/>
</dbReference>
<dbReference type="GO" id="GO:0006226">
    <property type="term" value="P:dUMP biosynthetic process"/>
    <property type="evidence" value="ECO:0007669"/>
    <property type="project" value="UniProtKB-UniRule"/>
</dbReference>
<dbReference type="GO" id="GO:0046081">
    <property type="term" value="P:dUTP catabolic process"/>
    <property type="evidence" value="ECO:0007669"/>
    <property type="project" value="InterPro"/>
</dbReference>
<dbReference type="CDD" id="cd07557">
    <property type="entry name" value="trimeric_dUTPase"/>
    <property type="match status" value="1"/>
</dbReference>
<dbReference type="Gene3D" id="2.70.40.10">
    <property type="match status" value="1"/>
</dbReference>
<dbReference type="HAMAP" id="MF_00116">
    <property type="entry name" value="dUTPase_bact"/>
    <property type="match status" value="1"/>
</dbReference>
<dbReference type="InterPro" id="IPR008181">
    <property type="entry name" value="dUTPase"/>
</dbReference>
<dbReference type="InterPro" id="IPR029054">
    <property type="entry name" value="dUTPase-like"/>
</dbReference>
<dbReference type="InterPro" id="IPR036157">
    <property type="entry name" value="dUTPase-like_sf"/>
</dbReference>
<dbReference type="InterPro" id="IPR033704">
    <property type="entry name" value="dUTPase_trimeric"/>
</dbReference>
<dbReference type="NCBIfam" id="TIGR00576">
    <property type="entry name" value="dut"/>
    <property type="match status" value="1"/>
</dbReference>
<dbReference type="NCBIfam" id="NF001862">
    <property type="entry name" value="PRK00601.1"/>
    <property type="match status" value="1"/>
</dbReference>
<dbReference type="PANTHER" id="PTHR11241">
    <property type="entry name" value="DEOXYURIDINE 5'-TRIPHOSPHATE NUCLEOTIDOHYDROLASE"/>
    <property type="match status" value="1"/>
</dbReference>
<dbReference type="PANTHER" id="PTHR11241:SF0">
    <property type="entry name" value="DEOXYURIDINE 5'-TRIPHOSPHATE NUCLEOTIDOHYDROLASE"/>
    <property type="match status" value="1"/>
</dbReference>
<dbReference type="Pfam" id="PF00692">
    <property type="entry name" value="dUTPase"/>
    <property type="match status" value="1"/>
</dbReference>
<dbReference type="SUPFAM" id="SSF51283">
    <property type="entry name" value="dUTPase-like"/>
    <property type="match status" value="1"/>
</dbReference>
<organism>
    <name type="scientific">Helicobacter hepaticus (strain ATCC 51449 / 3B1)</name>
    <dbReference type="NCBI Taxonomy" id="235279"/>
    <lineage>
        <taxon>Bacteria</taxon>
        <taxon>Pseudomonadati</taxon>
        <taxon>Campylobacterota</taxon>
        <taxon>Epsilonproteobacteria</taxon>
        <taxon>Campylobacterales</taxon>
        <taxon>Helicobacteraceae</taxon>
        <taxon>Helicobacter</taxon>
    </lineage>
</organism>
<feature type="chain" id="PRO_0000182868" description="Deoxyuridine 5'-triphosphate nucleotidohydrolase">
    <location>
        <begin position="1"/>
        <end position="158"/>
    </location>
</feature>
<feature type="region of interest" description="Disordered" evidence="2">
    <location>
        <begin position="139"/>
        <end position="158"/>
    </location>
</feature>
<feature type="binding site" evidence="1">
    <location>
        <begin position="66"/>
        <end position="68"/>
    </location>
    <ligand>
        <name>substrate</name>
    </ligand>
</feature>
<feature type="binding site" evidence="1">
    <location>
        <position position="79"/>
    </location>
    <ligand>
        <name>substrate</name>
    </ligand>
</feature>
<feature type="binding site" evidence="1">
    <location>
        <begin position="83"/>
        <end position="85"/>
    </location>
    <ligand>
        <name>substrate</name>
    </ligand>
</feature>
<feature type="binding site" evidence="1">
    <location>
        <position position="93"/>
    </location>
    <ligand>
        <name>substrate</name>
    </ligand>
</feature>
<accession>Q7VJU0</accession>
<gene>
    <name evidence="1" type="primary">dut</name>
    <name type="ordered locus">HH_0153</name>
</gene>
<sequence length="158" mass="17258">MMKHMHIKIKKLHSHAVIPSYQTPQAAGFDLHAVEDSLIKARDRGLVGTGLAFEIESGFEVQVRPRSGLALHNGVSVLNTPGTIDSDYRGEIKVILINHSNEDFHIHRGDRIAQAVVSEVTQAVFTEVQELGQSVRGERGFGSSGVARKGHYQGKPLA</sequence>
<protein>
    <recommendedName>
        <fullName evidence="1">Deoxyuridine 5'-triphosphate nucleotidohydrolase</fullName>
        <shortName evidence="1">dUTPase</shortName>
        <ecNumber evidence="1">3.6.1.23</ecNumber>
    </recommendedName>
    <alternativeName>
        <fullName evidence="1">dUTP pyrophosphatase</fullName>
    </alternativeName>
</protein>
<comment type="function">
    <text evidence="1">This enzyme is involved in nucleotide metabolism: it produces dUMP, the immediate precursor of thymidine nucleotides and it decreases the intracellular concentration of dUTP so that uracil cannot be incorporated into DNA.</text>
</comment>
<comment type="catalytic activity">
    <reaction evidence="1">
        <text>dUTP + H2O = dUMP + diphosphate + H(+)</text>
        <dbReference type="Rhea" id="RHEA:10248"/>
        <dbReference type="ChEBI" id="CHEBI:15377"/>
        <dbReference type="ChEBI" id="CHEBI:15378"/>
        <dbReference type="ChEBI" id="CHEBI:33019"/>
        <dbReference type="ChEBI" id="CHEBI:61555"/>
        <dbReference type="ChEBI" id="CHEBI:246422"/>
        <dbReference type="EC" id="3.6.1.23"/>
    </reaction>
</comment>
<comment type="cofactor">
    <cofactor evidence="1">
        <name>Mg(2+)</name>
        <dbReference type="ChEBI" id="CHEBI:18420"/>
    </cofactor>
</comment>
<comment type="pathway">
    <text evidence="1">Pyrimidine metabolism; dUMP biosynthesis; dUMP from dCTP (dUTP route): step 2/2.</text>
</comment>
<comment type="similarity">
    <text evidence="1">Belongs to the dUTPase family.</text>
</comment>
<reference key="1">
    <citation type="journal article" date="2003" name="Proc. Natl. Acad. Sci. U.S.A.">
        <title>The complete genome sequence of the carcinogenic bacterium Helicobacter hepaticus.</title>
        <authorList>
            <person name="Suerbaum S."/>
            <person name="Josenhans C."/>
            <person name="Sterzenbach T."/>
            <person name="Drescher B."/>
            <person name="Brandt P."/>
            <person name="Bell M."/>
            <person name="Droege M."/>
            <person name="Fartmann B."/>
            <person name="Fischer H.-P."/>
            <person name="Ge Z."/>
            <person name="Hoerster A."/>
            <person name="Holland R."/>
            <person name="Klein K."/>
            <person name="Koenig J."/>
            <person name="Macko L."/>
            <person name="Mendz G.L."/>
            <person name="Nyakatura G."/>
            <person name="Schauer D.B."/>
            <person name="Shen Z."/>
            <person name="Weber J."/>
            <person name="Frosch M."/>
            <person name="Fox J.G."/>
        </authorList>
    </citation>
    <scope>NUCLEOTIDE SEQUENCE [LARGE SCALE GENOMIC DNA]</scope>
    <source>
        <strain>ATCC 51449 / 3B1</strain>
    </source>
</reference>